<keyword id="KW-0963">Cytoplasm</keyword>
<keyword id="KW-0448">Lipopolysaccharide biosynthesis</keyword>
<keyword id="KW-1185">Reference proteome</keyword>
<keyword id="KW-0808">Transferase</keyword>
<feature type="chain" id="PRO_1000074991" description="2-dehydro-3-deoxyphosphooctonate aldolase">
    <location>
        <begin position="1"/>
        <end position="282"/>
    </location>
</feature>
<proteinExistence type="inferred from homology"/>
<name>KDSA_SHEPA</name>
<comment type="catalytic activity">
    <reaction evidence="1">
        <text>D-arabinose 5-phosphate + phosphoenolpyruvate + H2O = 3-deoxy-alpha-D-manno-2-octulosonate-8-phosphate + phosphate</text>
        <dbReference type="Rhea" id="RHEA:14053"/>
        <dbReference type="ChEBI" id="CHEBI:15377"/>
        <dbReference type="ChEBI" id="CHEBI:43474"/>
        <dbReference type="ChEBI" id="CHEBI:57693"/>
        <dbReference type="ChEBI" id="CHEBI:58702"/>
        <dbReference type="ChEBI" id="CHEBI:85985"/>
        <dbReference type="EC" id="2.5.1.55"/>
    </reaction>
</comment>
<comment type="pathway">
    <text evidence="1">Carbohydrate biosynthesis; 3-deoxy-D-manno-octulosonate biosynthesis; 3-deoxy-D-manno-octulosonate from D-ribulose 5-phosphate: step 2/3.</text>
</comment>
<comment type="pathway">
    <text evidence="1">Bacterial outer membrane biogenesis; lipopolysaccharide biosynthesis.</text>
</comment>
<comment type="subcellular location">
    <subcellularLocation>
        <location evidence="1">Cytoplasm</location>
    </subcellularLocation>
</comment>
<comment type="similarity">
    <text evidence="1">Belongs to the KdsA family.</text>
</comment>
<reference key="1">
    <citation type="submission" date="2007-10" db="EMBL/GenBank/DDBJ databases">
        <title>Complete sequence of Shewanella pealeana ATCC 700345.</title>
        <authorList>
            <consortium name="US DOE Joint Genome Institute"/>
            <person name="Copeland A."/>
            <person name="Lucas S."/>
            <person name="Lapidus A."/>
            <person name="Barry K."/>
            <person name="Glavina del Rio T."/>
            <person name="Dalin E."/>
            <person name="Tice H."/>
            <person name="Pitluck S."/>
            <person name="Chertkov O."/>
            <person name="Brettin T."/>
            <person name="Bruce D."/>
            <person name="Detter J.C."/>
            <person name="Han C."/>
            <person name="Schmutz J."/>
            <person name="Larimer F."/>
            <person name="Land M."/>
            <person name="Hauser L."/>
            <person name="Kyrpides N."/>
            <person name="Kim E."/>
            <person name="Zhao J.-S.Z."/>
            <person name="Manno D."/>
            <person name="Hawari J."/>
            <person name="Richardson P."/>
        </authorList>
    </citation>
    <scope>NUCLEOTIDE SEQUENCE [LARGE SCALE GENOMIC DNA]</scope>
    <source>
        <strain>ATCC 700345 / ANG-SQ1</strain>
    </source>
</reference>
<evidence type="ECO:0000255" key="1">
    <source>
        <dbReference type="HAMAP-Rule" id="MF_00056"/>
    </source>
</evidence>
<protein>
    <recommendedName>
        <fullName evidence="1">2-dehydro-3-deoxyphosphooctonate aldolase</fullName>
        <ecNumber evidence="1">2.5.1.55</ecNumber>
    </recommendedName>
    <alternativeName>
        <fullName evidence="1">3-deoxy-D-manno-octulosonic acid 8-phosphate synthase</fullName>
    </alternativeName>
    <alternativeName>
        <fullName evidence="1">KDO-8-phosphate synthase</fullName>
        <shortName evidence="1">KDO 8-P synthase</shortName>
        <shortName evidence="1">KDOPS</shortName>
    </alternativeName>
    <alternativeName>
        <fullName evidence="1">Phospho-2-dehydro-3-deoxyoctonate aldolase</fullName>
    </alternativeName>
</protein>
<sequence>MSNKIISLGSIEIANDKPFVLFGGMNVLESRDLAMQIAETYAEVTQKLGIPYVFKASFDKANRSSVNSYRGPGMEEGLKIFEEIKSTFNLPLITDVHEVHQCAPVAEVVDVIQLPAFLARQTDLVVAMAKTGAIINVKKPQFLAPHEMRHIITKFNEAGNDEIMLCERGSSFGYNNLVVDMLGMDEMKQTGYPVIFDATHALQRPGGRSDSAGGRRAQATELARSGMALGLAGLFIEAHPDPDNAKCDGPCALPLHQLENYLTQMKAIDDLVKSFEPIDTSK</sequence>
<dbReference type="EC" id="2.5.1.55" evidence="1"/>
<dbReference type="EMBL" id="CP000851">
    <property type="protein sequence ID" value="ABV88437.1"/>
    <property type="molecule type" value="Genomic_DNA"/>
</dbReference>
<dbReference type="RefSeq" id="WP_012156339.1">
    <property type="nucleotide sequence ID" value="NC_009901.1"/>
</dbReference>
<dbReference type="SMR" id="A8H7A0"/>
<dbReference type="STRING" id="398579.Spea_3121"/>
<dbReference type="KEGG" id="spl:Spea_3121"/>
<dbReference type="eggNOG" id="COG2877">
    <property type="taxonomic scope" value="Bacteria"/>
</dbReference>
<dbReference type="HOGENOM" id="CLU_036666_0_0_6"/>
<dbReference type="OrthoDB" id="9776934at2"/>
<dbReference type="UniPathway" id="UPA00030"/>
<dbReference type="UniPathway" id="UPA00357">
    <property type="reaction ID" value="UER00474"/>
</dbReference>
<dbReference type="Proteomes" id="UP000002608">
    <property type="component" value="Chromosome"/>
</dbReference>
<dbReference type="GO" id="GO:0005737">
    <property type="term" value="C:cytoplasm"/>
    <property type="evidence" value="ECO:0007669"/>
    <property type="project" value="UniProtKB-SubCell"/>
</dbReference>
<dbReference type="GO" id="GO:0008676">
    <property type="term" value="F:3-deoxy-8-phosphooctulonate synthase activity"/>
    <property type="evidence" value="ECO:0007669"/>
    <property type="project" value="UniProtKB-UniRule"/>
</dbReference>
<dbReference type="GO" id="GO:0019294">
    <property type="term" value="P:keto-3-deoxy-D-manno-octulosonic acid biosynthetic process"/>
    <property type="evidence" value="ECO:0007669"/>
    <property type="project" value="UniProtKB-UniRule"/>
</dbReference>
<dbReference type="Gene3D" id="3.20.20.70">
    <property type="entry name" value="Aldolase class I"/>
    <property type="match status" value="1"/>
</dbReference>
<dbReference type="HAMAP" id="MF_00056">
    <property type="entry name" value="KDO8P_synth"/>
    <property type="match status" value="1"/>
</dbReference>
<dbReference type="InterPro" id="IPR013785">
    <property type="entry name" value="Aldolase_TIM"/>
</dbReference>
<dbReference type="InterPro" id="IPR006218">
    <property type="entry name" value="DAHP1/KDSA"/>
</dbReference>
<dbReference type="InterPro" id="IPR006269">
    <property type="entry name" value="KDO8P_synthase"/>
</dbReference>
<dbReference type="NCBIfam" id="TIGR01362">
    <property type="entry name" value="KDO8P_synth"/>
    <property type="match status" value="1"/>
</dbReference>
<dbReference type="NCBIfam" id="NF003543">
    <property type="entry name" value="PRK05198.1"/>
    <property type="match status" value="1"/>
</dbReference>
<dbReference type="NCBIfam" id="NF009109">
    <property type="entry name" value="PRK12457.1"/>
    <property type="match status" value="1"/>
</dbReference>
<dbReference type="PANTHER" id="PTHR21057">
    <property type="entry name" value="PHOSPHO-2-DEHYDRO-3-DEOXYHEPTONATE ALDOLASE"/>
    <property type="match status" value="1"/>
</dbReference>
<dbReference type="Pfam" id="PF00793">
    <property type="entry name" value="DAHP_synth_1"/>
    <property type="match status" value="1"/>
</dbReference>
<dbReference type="SUPFAM" id="SSF51569">
    <property type="entry name" value="Aldolase"/>
    <property type="match status" value="1"/>
</dbReference>
<accession>A8H7A0</accession>
<organism>
    <name type="scientific">Shewanella pealeana (strain ATCC 700345 / ANG-SQ1)</name>
    <dbReference type="NCBI Taxonomy" id="398579"/>
    <lineage>
        <taxon>Bacteria</taxon>
        <taxon>Pseudomonadati</taxon>
        <taxon>Pseudomonadota</taxon>
        <taxon>Gammaproteobacteria</taxon>
        <taxon>Alteromonadales</taxon>
        <taxon>Shewanellaceae</taxon>
        <taxon>Shewanella</taxon>
    </lineage>
</organism>
<gene>
    <name evidence="1" type="primary">kdsA</name>
    <name type="ordered locus">Spea_3121</name>
</gene>